<dbReference type="EC" id="4.2.1.20" evidence="1"/>
<dbReference type="EMBL" id="CP000468">
    <property type="protein sequence ID" value="ABJ00720.1"/>
    <property type="molecule type" value="Genomic_DNA"/>
</dbReference>
<dbReference type="RefSeq" id="WP_000443098.1">
    <property type="nucleotide sequence ID" value="NZ_CADILS010000001.1"/>
</dbReference>
<dbReference type="SMR" id="A1AAN0"/>
<dbReference type="KEGG" id="ecv:APECO1_421"/>
<dbReference type="HOGENOM" id="CLU_016734_0_4_6"/>
<dbReference type="UniPathway" id="UPA00035">
    <property type="reaction ID" value="UER00044"/>
</dbReference>
<dbReference type="Proteomes" id="UP000008216">
    <property type="component" value="Chromosome"/>
</dbReference>
<dbReference type="GO" id="GO:0005829">
    <property type="term" value="C:cytosol"/>
    <property type="evidence" value="ECO:0007669"/>
    <property type="project" value="TreeGrafter"/>
</dbReference>
<dbReference type="GO" id="GO:0004834">
    <property type="term" value="F:tryptophan synthase activity"/>
    <property type="evidence" value="ECO:0007669"/>
    <property type="project" value="UniProtKB-UniRule"/>
</dbReference>
<dbReference type="CDD" id="cd04724">
    <property type="entry name" value="Tryptophan_synthase_alpha"/>
    <property type="match status" value="1"/>
</dbReference>
<dbReference type="FunFam" id="3.20.20.70:FF:000037">
    <property type="entry name" value="Tryptophan synthase alpha chain"/>
    <property type="match status" value="1"/>
</dbReference>
<dbReference type="Gene3D" id="3.20.20.70">
    <property type="entry name" value="Aldolase class I"/>
    <property type="match status" value="1"/>
</dbReference>
<dbReference type="HAMAP" id="MF_00131">
    <property type="entry name" value="Trp_synth_alpha"/>
    <property type="match status" value="1"/>
</dbReference>
<dbReference type="InterPro" id="IPR013785">
    <property type="entry name" value="Aldolase_TIM"/>
</dbReference>
<dbReference type="InterPro" id="IPR011060">
    <property type="entry name" value="RibuloseP-bd_barrel"/>
</dbReference>
<dbReference type="InterPro" id="IPR018204">
    <property type="entry name" value="Trp_synthase_alpha_AS"/>
</dbReference>
<dbReference type="InterPro" id="IPR002028">
    <property type="entry name" value="Trp_synthase_suA"/>
</dbReference>
<dbReference type="NCBIfam" id="TIGR00262">
    <property type="entry name" value="trpA"/>
    <property type="match status" value="1"/>
</dbReference>
<dbReference type="PANTHER" id="PTHR43406:SF1">
    <property type="entry name" value="TRYPTOPHAN SYNTHASE ALPHA CHAIN, CHLOROPLASTIC"/>
    <property type="match status" value="1"/>
</dbReference>
<dbReference type="PANTHER" id="PTHR43406">
    <property type="entry name" value="TRYPTOPHAN SYNTHASE, ALPHA CHAIN"/>
    <property type="match status" value="1"/>
</dbReference>
<dbReference type="Pfam" id="PF00290">
    <property type="entry name" value="Trp_syntA"/>
    <property type="match status" value="1"/>
</dbReference>
<dbReference type="SUPFAM" id="SSF51366">
    <property type="entry name" value="Ribulose-phoshate binding barrel"/>
    <property type="match status" value="1"/>
</dbReference>
<dbReference type="PROSITE" id="PS00167">
    <property type="entry name" value="TRP_SYNTHASE_ALPHA"/>
    <property type="match status" value="1"/>
</dbReference>
<sequence>MERYESLFTQLKERKEGAFVPFVTLGDPGIEQSLKIIDTLIEAGADALELGIPFSDPLADGPTIQNATLRAFAAGVTPAQCFEVLALIRQKHPTIPIGLLMYANLVFNKGIDEFYAECEKVGVDSVLVADVPVEESAPFRQAALRHNVAPIFICPPNADDDLLRQIASYGRGYTYLLSRAGVTGAENRAALPLNHLVAKLKEYNAAPPLQGFGISAPDQVKAAIDAGAAGAISGSAIVKIIEQHINEPEKMLAALKAFVQPMKAATRS</sequence>
<organism>
    <name type="scientific">Escherichia coli O1:K1 / APEC</name>
    <dbReference type="NCBI Taxonomy" id="405955"/>
    <lineage>
        <taxon>Bacteria</taxon>
        <taxon>Pseudomonadati</taxon>
        <taxon>Pseudomonadota</taxon>
        <taxon>Gammaproteobacteria</taxon>
        <taxon>Enterobacterales</taxon>
        <taxon>Enterobacteriaceae</taxon>
        <taxon>Escherichia</taxon>
    </lineage>
</organism>
<accession>A1AAN0</accession>
<reference key="1">
    <citation type="journal article" date="2007" name="J. Bacteriol.">
        <title>The genome sequence of avian pathogenic Escherichia coli strain O1:K1:H7 shares strong similarities with human extraintestinal pathogenic E. coli genomes.</title>
        <authorList>
            <person name="Johnson T.J."/>
            <person name="Kariyawasam S."/>
            <person name="Wannemuehler Y."/>
            <person name="Mangiamele P."/>
            <person name="Johnson S.J."/>
            <person name="Doetkott C."/>
            <person name="Skyberg J.A."/>
            <person name="Lynne A.M."/>
            <person name="Johnson J.R."/>
            <person name="Nolan L.K."/>
        </authorList>
    </citation>
    <scope>NUCLEOTIDE SEQUENCE [LARGE SCALE GENOMIC DNA]</scope>
</reference>
<evidence type="ECO:0000255" key="1">
    <source>
        <dbReference type="HAMAP-Rule" id="MF_00131"/>
    </source>
</evidence>
<keyword id="KW-0028">Amino-acid biosynthesis</keyword>
<keyword id="KW-0057">Aromatic amino acid biosynthesis</keyword>
<keyword id="KW-0456">Lyase</keyword>
<keyword id="KW-1185">Reference proteome</keyword>
<keyword id="KW-0822">Tryptophan biosynthesis</keyword>
<name>TRPA_ECOK1</name>
<proteinExistence type="inferred from homology"/>
<gene>
    <name evidence="1" type="primary">trpA</name>
    <name type="ordered locus">Ecok1_12260</name>
    <name type="ORF">APECO1_421</name>
</gene>
<feature type="chain" id="PRO_1000018196" description="Tryptophan synthase alpha chain">
    <location>
        <begin position="1"/>
        <end position="268"/>
    </location>
</feature>
<feature type="active site" description="Proton acceptor" evidence="1">
    <location>
        <position position="49"/>
    </location>
</feature>
<feature type="active site" description="Proton acceptor" evidence="1">
    <location>
        <position position="60"/>
    </location>
</feature>
<comment type="function">
    <text evidence="1">The alpha subunit is responsible for the aldol cleavage of indoleglycerol phosphate to indole and glyceraldehyde 3-phosphate.</text>
</comment>
<comment type="catalytic activity">
    <reaction evidence="1">
        <text>(1S,2R)-1-C-(indol-3-yl)glycerol 3-phosphate + L-serine = D-glyceraldehyde 3-phosphate + L-tryptophan + H2O</text>
        <dbReference type="Rhea" id="RHEA:10532"/>
        <dbReference type="ChEBI" id="CHEBI:15377"/>
        <dbReference type="ChEBI" id="CHEBI:33384"/>
        <dbReference type="ChEBI" id="CHEBI:57912"/>
        <dbReference type="ChEBI" id="CHEBI:58866"/>
        <dbReference type="ChEBI" id="CHEBI:59776"/>
        <dbReference type="EC" id="4.2.1.20"/>
    </reaction>
</comment>
<comment type="pathway">
    <text evidence="1">Amino-acid biosynthesis; L-tryptophan biosynthesis; L-tryptophan from chorismate: step 5/5.</text>
</comment>
<comment type="subunit">
    <text evidence="1">Tetramer of two alpha and two beta chains.</text>
</comment>
<comment type="similarity">
    <text evidence="1">Belongs to the TrpA family.</text>
</comment>
<protein>
    <recommendedName>
        <fullName evidence="1">Tryptophan synthase alpha chain</fullName>
        <ecNumber evidence="1">4.2.1.20</ecNumber>
    </recommendedName>
</protein>